<keyword id="KW-0119">Carbohydrate metabolism</keyword>
<keyword id="KW-0413">Isomerase</keyword>
<dbReference type="EC" id="5.1.3.9" evidence="1"/>
<dbReference type="EMBL" id="CP001175">
    <property type="protein sequence ID" value="ACK41059.1"/>
    <property type="molecule type" value="Genomic_DNA"/>
</dbReference>
<dbReference type="RefSeq" id="WP_003732140.1">
    <property type="nucleotide sequence ID" value="NC_011660.1"/>
</dbReference>
<dbReference type="SMR" id="B8DD13"/>
<dbReference type="KEGG" id="lmh:LMHCC_2724"/>
<dbReference type="HOGENOM" id="CLU_086300_1_0_9"/>
<dbReference type="UniPathway" id="UPA00629">
    <property type="reaction ID" value="UER00682"/>
</dbReference>
<dbReference type="GO" id="GO:0005829">
    <property type="term" value="C:cytosol"/>
    <property type="evidence" value="ECO:0007669"/>
    <property type="project" value="TreeGrafter"/>
</dbReference>
<dbReference type="GO" id="GO:0047465">
    <property type="term" value="F:N-acylglucosamine-6-phosphate 2-epimerase activity"/>
    <property type="evidence" value="ECO:0007669"/>
    <property type="project" value="UniProtKB-EC"/>
</dbReference>
<dbReference type="GO" id="GO:0005975">
    <property type="term" value="P:carbohydrate metabolic process"/>
    <property type="evidence" value="ECO:0007669"/>
    <property type="project" value="UniProtKB-UniRule"/>
</dbReference>
<dbReference type="GO" id="GO:0006053">
    <property type="term" value="P:N-acetylmannosamine catabolic process"/>
    <property type="evidence" value="ECO:0007669"/>
    <property type="project" value="TreeGrafter"/>
</dbReference>
<dbReference type="GO" id="GO:0019262">
    <property type="term" value="P:N-acetylneuraminate catabolic process"/>
    <property type="evidence" value="ECO:0007669"/>
    <property type="project" value="UniProtKB-UniRule"/>
</dbReference>
<dbReference type="CDD" id="cd04729">
    <property type="entry name" value="NanE"/>
    <property type="match status" value="1"/>
</dbReference>
<dbReference type="FunFam" id="3.20.20.70:FF:000035">
    <property type="entry name" value="Putative N-acetylmannosamine-6-phosphate 2-epimerase"/>
    <property type="match status" value="1"/>
</dbReference>
<dbReference type="Gene3D" id="3.20.20.70">
    <property type="entry name" value="Aldolase class I"/>
    <property type="match status" value="1"/>
</dbReference>
<dbReference type="HAMAP" id="MF_01235">
    <property type="entry name" value="ManNAc6P_epimer"/>
    <property type="match status" value="1"/>
</dbReference>
<dbReference type="InterPro" id="IPR013785">
    <property type="entry name" value="Aldolase_TIM"/>
</dbReference>
<dbReference type="InterPro" id="IPR007260">
    <property type="entry name" value="NanE"/>
</dbReference>
<dbReference type="InterPro" id="IPR011060">
    <property type="entry name" value="RibuloseP-bd_barrel"/>
</dbReference>
<dbReference type="NCBIfam" id="NF002231">
    <property type="entry name" value="PRK01130.1"/>
    <property type="match status" value="1"/>
</dbReference>
<dbReference type="PANTHER" id="PTHR36204">
    <property type="entry name" value="N-ACETYLMANNOSAMINE-6-PHOSPHATE 2-EPIMERASE-RELATED"/>
    <property type="match status" value="1"/>
</dbReference>
<dbReference type="PANTHER" id="PTHR36204:SF1">
    <property type="entry name" value="N-ACETYLMANNOSAMINE-6-PHOSPHATE 2-EPIMERASE-RELATED"/>
    <property type="match status" value="1"/>
</dbReference>
<dbReference type="Pfam" id="PF04131">
    <property type="entry name" value="NanE"/>
    <property type="match status" value="1"/>
</dbReference>
<dbReference type="SUPFAM" id="SSF51366">
    <property type="entry name" value="Ribulose-phoshate binding barrel"/>
    <property type="match status" value="1"/>
</dbReference>
<evidence type="ECO:0000255" key="1">
    <source>
        <dbReference type="HAMAP-Rule" id="MF_01235"/>
    </source>
</evidence>
<reference key="1">
    <citation type="journal article" date="2011" name="J. Bacteriol.">
        <title>Genome sequence of lineage III Listeria monocytogenes strain HCC23.</title>
        <authorList>
            <person name="Steele C.L."/>
            <person name="Donaldson J.R."/>
            <person name="Paul D."/>
            <person name="Banes M.M."/>
            <person name="Arick T."/>
            <person name="Bridges S.M."/>
            <person name="Lawrence M.L."/>
        </authorList>
    </citation>
    <scope>NUCLEOTIDE SEQUENCE [LARGE SCALE GENOMIC DNA]</scope>
    <source>
        <strain>HCC23</strain>
    </source>
</reference>
<name>NANE_LISMH</name>
<comment type="function">
    <text evidence="1">Converts N-acetylmannosamine-6-phosphate (ManNAc-6-P) to N-acetylglucosamine-6-phosphate (GlcNAc-6-P).</text>
</comment>
<comment type="catalytic activity">
    <reaction evidence="1">
        <text>an N-acyl-D-glucosamine 6-phosphate = an N-acyl-D-mannosamine 6-phosphate</text>
        <dbReference type="Rhea" id="RHEA:23932"/>
        <dbReference type="ChEBI" id="CHEBI:57599"/>
        <dbReference type="ChEBI" id="CHEBI:57666"/>
        <dbReference type="EC" id="5.1.3.9"/>
    </reaction>
</comment>
<comment type="pathway">
    <text evidence="1">Amino-sugar metabolism; N-acetylneuraminate degradation; D-fructose 6-phosphate from N-acetylneuraminate: step 3/5.</text>
</comment>
<comment type="similarity">
    <text evidence="1">Belongs to the NanE family.</text>
</comment>
<organism>
    <name type="scientific">Listeria monocytogenes serotype 4a (strain HCC23)</name>
    <dbReference type="NCBI Taxonomy" id="552536"/>
    <lineage>
        <taxon>Bacteria</taxon>
        <taxon>Bacillati</taxon>
        <taxon>Bacillota</taxon>
        <taxon>Bacilli</taxon>
        <taxon>Bacillales</taxon>
        <taxon>Listeriaceae</taxon>
        <taxon>Listeria</taxon>
    </lineage>
</organism>
<protein>
    <recommendedName>
        <fullName evidence="1">Putative N-acetylmannosamine-6-phosphate 2-epimerase</fullName>
        <ecNumber evidence="1">5.1.3.9</ecNumber>
    </recommendedName>
    <alternativeName>
        <fullName evidence="1">ManNAc-6-P epimerase</fullName>
    </alternativeName>
</protein>
<feature type="chain" id="PRO_1000164993" description="Putative N-acetylmannosamine-6-phosphate 2-epimerase">
    <location>
        <begin position="1"/>
        <end position="237"/>
    </location>
</feature>
<proteinExistence type="inferred from homology"/>
<sequence length="237" mass="26066">MGNSVMEKIKGGLVVSCQALEDEPLHSAFIMSKMALAAVQGGAVGIRANTAKDIRAIQSEIDVPIIGIYKKDYDDSDVFITPTLKEVREICETGVEIVAMDATTRKRPHNEDLKEILSAIRKEFPNTLFMADTGSIEDVYYADSLGFDLIGTTLYGYTEETANKNISDDDFSHLKEVLKSTKRPVIAEGKIDSPSKARQVLTLGCYAVVVGGAVTRPQEITTRFTNEIQKIQEERGK</sequence>
<accession>B8DD13</accession>
<gene>
    <name evidence="1" type="primary">nanE</name>
    <name type="ordered locus">LMHCC_2724</name>
</gene>